<protein>
    <recommendedName>
        <fullName evidence="2">Bacteriocin licheniocin 50.2</fullName>
    </recommendedName>
</protein>
<proteinExistence type="evidence at protein level"/>
<comment type="function">
    <text evidence="1">Bacteriocin active against species of Gram-positive bacterial genera Bacillus, Enterococcus, Lactobacillus, Lactococcus, Micrococcus, Staphylococcus and Streptococcus. Active against L.monocytogenes (MIC=0.53 mg/ml). Has no activity against various Gram-negative species. Has no activity against strains of fungi C.albicans and A.brasiliensis.</text>
</comment>
<comment type="biophysicochemical properties">
    <phDependence>
        <text evidence="1">Stable from pH 2 to 12.</text>
    </phDependence>
    <temperatureDependence>
        <text evidence="1">Thermostable. Retains 100% activity after incubaction at 100 degrees Celsius for 30 minutes. Retains 70% activity after incubation at 121 degrees Celsius at high pressure for 30 minutes.</text>
    </temperatureDependence>
</comment>
<comment type="subcellular location">
    <subcellularLocation>
        <location evidence="1">Secreted</location>
    </subcellularLocation>
</comment>
<comment type="mass spectrometry"/>
<comment type="miscellaneous">
    <text evidence="1">Antibacterial activity is lost upon treatment with pronase E and partially with trypsin but not when treated with lysozyme or proteinase K.</text>
</comment>
<feature type="peptide" id="PRO_0000435029" description="Bacteriocin licheniocin 50.2">
    <location>
        <begin position="1"/>
        <end position="15" status="greater than"/>
    </location>
</feature>
<feature type="non-terminal residue" evidence="1">
    <location>
        <position position="15"/>
    </location>
</feature>
<name>LIN50_BACLI</name>
<evidence type="ECO:0000269" key="1">
    <source>
    </source>
</evidence>
<evidence type="ECO:0000303" key="2">
    <source>
    </source>
</evidence>
<evidence type="ECO:0000305" key="3"/>
<organism evidence="2">
    <name type="scientific">Bacillus licheniformis</name>
    <dbReference type="NCBI Taxonomy" id="1402"/>
    <lineage>
        <taxon>Bacteria</taxon>
        <taxon>Bacillati</taxon>
        <taxon>Bacillota</taxon>
        <taxon>Bacilli</taxon>
        <taxon>Bacillales</taxon>
        <taxon>Bacillaceae</taxon>
        <taxon>Bacillus</taxon>
    </lineage>
</organism>
<keyword id="KW-0044">Antibiotic</keyword>
<keyword id="KW-0929">Antimicrobial</keyword>
<keyword id="KW-0078">Bacteriocin</keyword>
<keyword id="KW-0903">Direct protein sequencing</keyword>
<keyword id="KW-0964">Secreted</keyword>
<accession>B3EWP7</accession>
<sequence>WEEYNIIXQLGNKGQ</sequence>
<dbReference type="GO" id="GO:0005576">
    <property type="term" value="C:extracellular region"/>
    <property type="evidence" value="ECO:0007669"/>
    <property type="project" value="UniProtKB-SubCell"/>
</dbReference>
<dbReference type="GO" id="GO:0042742">
    <property type="term" value="P:defense response to bacterium"/>
    <property type="evidence" value="ECO:0007669"/>
    <property type="project" value="UniProtKB-KW"/>
</dbReference>
<dbReference type="GO" id="GO:0031640">
    <property type="term" value="P:killing of cells of another organism"/>
    <property type="evidence" value="ECO:0007669"/>
    <property type="project" value="UniProtKB-KW"/>
</dbReference>
<reference evidence="3" key="1">
    <citation type="journal article" date="2014" name="J. Appl. Microbiol.">
        <title>Novel antilisterial bacteriocin licheniocin 50.2 from Bacillus licheniformis VPS50.2 isolated from soil sample.</title>
        <authorList>
            <person name="Beric T."/>
            <person name="Stankovic S."/>
            <person name="Draganic V."/>
            <person name="Kojic M."/>
            <person name="Lozo J."/>
            <person name="Fira D."/>
        </authorList>
    </citation>
    <scope>PROTEIN SEQUENCE</scope>
    <scope>FUNCTION</scope>
    <scope>BIOPHYSICOCHEMICAL PROPERTIES</scope>
    <scope>SUBCELLULAR LOCATION</scope>
    <scope>MASS SPECTROMETRY</scope>
    <source>
        <strain evidence="2">VPS50.2</strain>
    </source>
</reference>